<name>RS15_SYNS9</name>
<comment type="function">
    <text evidence="1">One of the primary rRNA binding proteins, it binds directly to 16S rRNA where it helps nucleate assembly of the platform of the 30S subunit by binding and bridging several RNA helices of the 16S rRNA.</text>
</comment>
<comment type="function">
    <text evidence="1">Forms an intersubunit bridge (bridge B4) with the 23S rRNA of the 50S subunit in the ribosome.</text>
</comment>
<comment type="subunit">
    <text evidence="1">Part of the 30S ribosomal subunit. Forms a bridge to the 50S subunit in the 70S ribosome, contacting the 23S rRNA.</text>
</comment>
<comment type="similarity">
    <text evidence="1">Belongs to the universal ribosomal protein uS15 family.</text>
</comment>
<protein>
    <recommendedName>
        <fullName evidence="1">Small ribosomal subunit protein uS15</fullName>
    </recommendedName>
    <alternativeName>
        <fullName evidence="3">30S ribosomal protein S15</fullName>
    </alternativeName>
</protein>
<proteinExistence type="inferred from homology"/>
<reference key="1">
    <citation type="submission" date="2005-08" db="EMBL/GenBank/DDBJ databases">
        <title>Complete sequence of Synechococcus sp. CC9902.</title>
        <authorList>
            <person name="Copeland A."/>
            <person name="Lucas S."/>
            <person name="Lapidus A."/>
            <person name="Barry K."/>
            <person name="Detter J.C."/>
            <person name="Glavina T."/>
            <person name="Hammon N."/>
            <person name="Israni S."/>
            <person name="Pitluck S."/>
            <person name="Martinez M."/>
            <person name="Schmutz J."/>
            <person name="Larimer F."/>
            <person name="Land M."/>
            <person name="Kyrpides N."/>
            <person name="Ivanova N."/>
            <person name="Richardson P."/>
        </authorList>
    </citation>
    <scope>NUCLEOTIDE SEQUENCE [LARGE SCALE GENOMIC DNA]</scope>
    <source>
        <strain>CC9902</strain>
    </source>
</reference>
<gene>
    <name evidence="1" type="primary">rpsO</name>
    <name evidence="1" type="synonym">rps15</name>
    <name type="ordered locus">Syncc9902_1299</name>
</gene>
<dbReference type="EMBL" id="CP000097">
    <property type="protein sequence ID" value="ABB26263.1"/>
    <property type="molecule type" value="Genomic_DNA"/>
</dbReference>
<dbReference type="RefSeq" id="WP_011360088.1">
    <property type="nucleotide sequence ID" value="NC_007513.1"/>
</dbReference>
<dbReference type="SMR" id="Q3AVK1"/>
<dbReference type="STRING" id="316279.Syncc9902_1299"/>
<dbReference type="KEGG" id="sye:Syncc9902_1299"/>
<dbReference type="eggNOG" id="COG0184">
    <property type="taxonomic scope" value="Bacteria"/>
</dbReference>
<dbReference type="HOGENOM" id="CLU_148518_0_1_3"/>
<dbReference type="OrthoDB" id="9799262at2"/>
<dbReference type="Proteomes" id="UP000002712">
    <property type="component" value="Chromosome"/>
</dbReference>
<dbReference type="GO" id="GO:0022627">
    <property type="term" value="C:cytosolic small ribosomal subunit"/>
    <property type="evidence" value="ECO:0007669"/>
    <property type="project" value="TreeGrafter"/>
</dbReference>
<dbReference type="GO" id="GO:0019843">
    <property type="term" value="F:rRNA binding"/>
    <property type="evidence" value="ECO:0007669"/>
    <property type="project" value="UniProtKB-UniRule"/>
</dbReference>
<dbReference type="GO" id="GO:0003735">
    <property type="term" value="F:structural constituent of ribosome"/>
    <property type="evidence" value="ECO:0007669"/>
    <property type="project" value="InterPro"/>
</dbReference>
<dbReference type="GO" id="GO:0006412">
    <property type="term" value="P:translation"/>
    <property type="evidence" value="ECO:0007669"/>
    <property type="project" value="UniProtKB-UniRule"/>
</dbReference>
<dbReference type="CDD" id="cd00353">
    <property type="entry name" value="Ribosomal_S15p_S13e"/>
    <property type="match status" value="1"/>
</dbReference>
<dbReference type="FunFam" id="1.10.287.10:FF:000002">
    <property type="entry name" value="30S ribosomal protein S15"/>
    <property type="match status" value="1"/>
</dbReference>
<dbReference type="Gene3D" id="6.10.250.3130">
    <property type="match status" value="1"/>
</dbReference>
<dbReference type="Gene3D" id="1.10.287.10">
    <property type="entry name" value="S15/NS1, RNA-binding"/>
    <property type="match status" value="1"/>
</dbReference>
<dbReference type="HAMAP" id="MF_01343_B">
    <property type="entry name" value="Ribosomal_uS15_B"/>
    <property type="match status" value="1"/>
</dbReference>
<dbReference type="InterPro" id="IPR000589">
    <property type="entry name" value="Ribosomal_uS15"/>
</dbReference>
<dbReference type="InterPro" id="IPR005290">
    <property type="entry name" value="Ribosomal_uS15_bac-type"/>
</dbReference>
<dbReference type="InterPro" id="IPR009068">
    <property type="entry name" value="uS15_NS1_RNA-bd_sf"/>
</dbReference>
<dbReference type="NCBIfam" id="TIGR00952">
    <property type="entry name" value="S15_bact"/>
    <property type="match status" value="1"/>
</dbReference>
<dbReference type="PANTHER" id="PTHR23321">
    <property type="entry name" value="RIBOSOMAL PROTEIN S15, BACTERIAL AND ORGANELLAR"/>
    <property type="match status" value="1"/>
</dbReference>
<dbReference type="PANTHER" id="PTHR23321:SF26">
    <property type="entry name" value="SMALL RIBOSOMAL SUBUNIT PROTEIN US15M"/>
    <property type="match status" value="1"/>
</dbReference>
<dbReference type="Pfam" id="PF00312">
    <property type="entry name" value="Ribosomal_S15"/>
    <property type="match status" value="1"/>
</dbReference>
<dbReference type="SMART" id="SM01387">
    <property type="entry name" value="Ribosomal_S15"/>
    <property type="match status" value="1"/>
</dbReference>
<dbReference type="SUPFAM" id="SSF47060">
    <property type="entry name" value="S15/NS1 RNA-binding domain"/>
    <property type="match status" value="1"/>
</dbReference>
<dbReference type="PROSITE" id="PS00362">
    <property type="entry name" value="RIBOSOMAL_S15"/>
    <property type="match status" value="1"/>
</dbReference>
<evidence type="ECO:0000255" key="1">
    <source>
        <dbReference type="HAMAP-Rule" id="MF_01343"/>
    </source>
</evidence>
<evidence type="ECO:0000256" key="2">
    <source>
        <dbReference type="SAM" id="MobiDB-lite"/>
    </source>
</evidence>
<evidence type="ECO:0000305" key="3"/>
<feature type="chain" id="PRO_0000255541" description="Small ribosomal subunit protein uS15">
    <location>
        <begin position="1"/>
        <end position="89"/>
    </location>
</feature>
<feature type="region of interest" description="Disordered" evidence="2">
    <location>
        <begin position="1"/>
        <end position="25"/>
    </location>
</feature>
<feature type="compositionally biased region" description="Polar residues" evidence="2">
    <location>
        <begin position="8"/>
        <end position="25"/>
    </location>
</feature>
<keyword id="KW-1185">Reference proteome</keyword>
<keyword id="KW-0687">Ribonucleoprotein</keyword>
<keyword id="KW-0689">Ribosomal protein</keyword>
<keyword id="KW-0694">RNA-binding</keyword>
<keyword id="KW-0699">rRNA-binding</keyword>
<organism>
    <name type="scientific">Synechococcus sp. (strain CC9902)</name>
    <dbReference type="NCBI Taxonomy" id="316279"/>
    <lineage>
        <taxon>Bacteria</taxon>
        <taxon>Bacillati</taxon>
        <taxon>Cyanobacteriota</taxon>
        <taxon>Cyanophyceae</taxon>
        <taxon>Synechococcales</taxon>
        <taxon>Synechococcaceae</taxon>
        <taxon>Synechococcus</taxon>
    </lineage>
</organism>
<sequence>MSLDTTEKQQLINTHQTHGTDTGSAEVQVAMLSERINRLSGHLQNNIHDFSSRQGLLKMIGRRKRLLNYMRSKSEQRYSETISKLGIRG</sequence>
<accession>Q3AVK1</accession>